<protein>
    <recommendedName>
        <fullName evidence="1">Protein ApaG</fullName>
    </recommendedName>
</protein>
<keyword id="KW-1185">Reference proteome</keyword>
<dbReference type="EMBL" id="AE005673">
    <property type="protein sequence ID" value="AAK24210.1"/>
    <property type="status" value="ALT_INIT"/>
    <property type="molecule type" value="Genomic_DNA"/>
</dbReference>
<dbReference type="PIR" id="F87526">
    <property type="entry name" value="F87526"/>
</dbReference>
<dbReference type="RefSeq" id="NP_421042.1">
    <property type="nucleotide sequence ID" value="NC_002696.2"/>
</dbReference>
<dbReference type="RefSeq" id="WP_010920100.1">
    <property type="nucleotide sequence ID" value="NC_002696.2"/>
</dbReference>
<dbReference type="SMR" id="Q9A655"/>
<dbReference type="STRING" id="190650.CC_2239"/>
<dbReference type="EnsemblBacteria" id="AAK24210">
    <property type="protein sequence ID" value="AAK24210"/>
    <property type="gene ID" value="CC_2239"/>
</dbReference>
<dbReference type="KEGG" id="ccr:CC_2239"/>
<dbReference type="PATRIC" id="fig|190650.5.peg.2256"/>
<dbReference type="eggNOG" id="COG2967">
    <property type="taxonomic scope" value="Bacteria"/>
</dbReference>
<dbReference type="HOGENOM" id="CLU_128074_1_0_5"/>
<dbReference type="Proteomes" id="UP000001816">
    <property type="component" value="Chromosome"/>
</dbReference>
<dbReference type="GO" id="GO:0070987">
    <property type="term" value="P:error-free translesion synthesis"/>
    <property type="evidence" value="ECO:0007669"/>
    <property type="project" value="TreeGrafter"/>
</dbReference>
<dbReference type="Gene3D" id="2.60.40.1470">
    <property type="entry name" value="ApaG domain"/>
    <property type="match status" value="1"/>
</dbReference>
<dbReference type="HAMAP" id="MF_00791">
    <property type="entry name" value="ApaG"/>
    <property type="match status" value="1"/>
</dbReference>
<dbReference type="InterPro" id="IPR007474">
    <property type="entry name" value="ApaG_domain"/>
</dbReference>
<dbReference type="InterPro" id="IPR036767">
    <property type="entry name" value="ApaG_sf"/>
</dbReference>
<dbReference type="InterPro" id="IPR023065">
    <property type="entry name" value="Uncharacterised_ApaG"/>
</dbReference>
<dbReference type="NCBIfam" id="NF003967">
    <property type="entry name" value="PRK05461.1"/>
    <property type="match status" value="1"/>
</dbReference>
<dbReference type="PANTHER" id="PTHR14289">
    <property type="entry name" value="F-BOX ONLY PROTEIN 3"/>
    <property type="match status" value="1"/>
</dbReference>
<dbReference type="PANTHER" id="PTHR14289:SF16">
    <property type="entry name" value="POLYMERASE DELTA-INTERACTING PROTEIN 2"/>
    <property type="match status" value="1"/>
</dbReference>
<dbReference type="Pfam" id="PF04379">
    <property type="entry name" value="DUF525"/>
    <property type="match status" value="1"/>
</dbReference>
<dbReference type="SUPFAM" id="SSF110069">
    <property type="entry name" value="ApaG-like"/>
    <property type="match status" value="1"/>
</dbReference>
<dbReference type="PROSITE" id="PS51087">
    <property type="entry name" value="APAG"/>
    <property type="match status" value="1"/>
</dbReference>
<evidence type="ECO:0000255" key="1">
    <source>
        <dbReference type="HAMAP-Rule" id="MF_00791"/>
    </source>
</evidence>
<evidence type="ECO:0000305" key="2"/>
<comment type="sequence caution" evidence="2">
    <conflict type="erroneous initiation">
        <sequence resource="EMBL-CDS" id="AAK24210"/>
    </conflict>
</comment>
<reference key="1">
    <citation type="journal article" date="2001" name="Proc. Natl. Acad. Sci. U.S.A.">
        <title>Complete genome sequence of Caulobacter crescentus.</title>
        <authorList>
            <person name="Nierman W.C."/>
            <person name="Feldblyum T.V."/>
            <person name="Laub M.T."/>
            <person name="Paulsen I.T."/>
            <person name="Nelson K.E."/>
            <person name="Eisen J.A."/>
            <person name="Heidelberg J.F."/>
            <person name="Alley M.R.K."/>
            <person name="Ohta N."/>
            <person name="Maddock J.R."/>
            <person name="Potocka I."/>
            <person name="Nelson W.C."/>
            <person name="Newton A."/>
            <person name="Stephens C."/>
            <person name="Phadke N.D."/>
            <person name="Ely B."/>
            <person name="DeBoy R.T."/>
            <person name="Dodson R.J."/>
            <person name="Durkin A.S."/>
            <person name="Gwinn M.L."/>
            <person name="Haft D.H."/>
            <person name="Kolonay J.F."/>
            <person name="Smit J."/>
            <person name="Craven M.B."/>
            <person name="Khouri H.M."/>
            <person name="Shetty J."/>
            <person name="Berry K.J."/>
            <person name="Utterback T.R."/>
            <person name="Tran K."/>
            <person name="Wolf A.M."/>
            <person name="Vamathevan J.J."/>
            <person name="Ermolaeva M.D."/>
            <person name="White O."/>
            <person name="Salzberg S.L."/>
            <person name="Venter J.C."/>
            <person name="Shapiro L."/>
            <person name="Fraser C.M."/>
        </authorList>
    </citation>
    <scope>NUCLEOTIDE SEQUENCE [LARGE SCALE GENOMIC DNA]</scope>
    <source>
        <strain>ATCC 19089 / CIP 103742 / CB 15</strain>
    </source>
</reference>
<organism>
    <name type="scientific">Caulobacter vibrioides (strain ATCC 19089 / CIP 103742 / CB 15)</name>
    <name type="common">Caulobacter crescentus</name>
    <dbReference type="NCBI Taxonomy" id="190650"/>
    <lineage>
        <taxon>Bacteria</taxon>
        <taxon>Pseudomonadati</taxon>
        <taxon>Pseudomonadota</taxon>
        <taxon>Alphaproteobacteria</taxon>
        <taxon>Caulobacterales</taxon>
        <taxon>Caulobacteraceae</taxon>
        <taxon>Caulobacter</taxon>
    </lineage>
</organism>
<accession>Q9A655</accession>
<feature type="chain" id="PRO_0000197944" description="Protein ApaG">
    <location>
        <begin position="1"/>
        <end position="140"/>
    </location>
</feature>
<feature type="domain" description="ApaG" evidence="1">
    <location>
        <begin position="13"/>
        <end position="137"/>
    </location>
</feature>
<gene>
    <name evidence="1" type="primary">apaG</name>
    <name type="ordered locus">CC_2239</name>
</gene>
<proteinExistence type="inferred from homology"/>
<name>APAG_CAUVC</name>
<sequence>MRRRRGSDSAAYEARTRDIVVRVFPTYAAEESSPEQGLYLWSYTVEIENHGEETVTLIARRWTITDGFNRVNEVEGSGVVGEQPELKPREAFRYVSNCPLPTPSGAMRGSYQMVTDAGDLFDVAIPEFSLHLPGAAMKLN</sequence>